<protein>
    <recommendedName>
        <fullName>Exocyst complex component exo70</fullName>
    </recommendedName>
</protein>
<keyword id="KW-0268">Exocytosis</keyword>
<keyword id="KW-0597">Phosphoprotein</keyword>
<keyword id="KW-0653">Protein transport</keyword>
<keyword id="KW-1185">Reference proteome</keyword>
<keyword id="KW-0813">Transport</keyword>
<evidence type="ECO:0000250" key="1"/>
<evidence type="ECO:0000269" key="2">
    <source>
    </source>
</evidence>
<evidence type="ECO:0000305" key="3"/>
<gene>
    <name type="primary">exo70</name>
    <name type="ORF">SPBC106.20</name>
    <name type="ORF">SPBC582.02</name>
</gene>
<name>EXO70_SCHPO</name>
<sequence>MSGGIFDDNKAGFETFQKNLNSVAKNVSDASNILLSMDKRLSGLEASAGILRDDVTNYNRVSSNIYDTLKEMESLQVIHSHLPVLQKGLQECQNLNKSVSQNLKSVMDILKSLAEDYTSLEGSPLQFASKSQQKVEMMLSEGCQILGALCYNILETYAASSLNKASTLLDLSIPWSFPNESLQQFIGLIQQFDADVLFPVSCSSDISNIYIKIKGECVVKLLHAVSMRTDEIKLNEGSVNFVTGKEDVSINLVALSRLLPAVASELLLLFDQVTAKALYPKIVKPAINTVTNATRQLEGVYEKRGAAENFVLLSLIDCIVVTRQNMNNLMPFEDASFLGFVNGVGREMEKILISSISRLYNGTCHNNKTVPLTTDRVSEMTHGIMSFLNELAEHENASYLLESIGNWGWRHEINADLSPARSVQDITRNYVMDCMDSYLTSVQTAAQAVDTIGWKMGVMLLNISVYFEAKCLESKIASFLQDVDLEKLGDRSQKYSTMYMEVWRQCSQNMLDSTYTKSQNKSTMSAKEREITKEKFRNFNEQVTSVVQVHRESVRFETGVATFLLQEVKKTVLPLYQRFYDKYINSDFTKNKDKYIKFTKADLDSFITSAFAPSL</sequence>
<organism>
    <name type="scientific">Schizosaccharomyces pombe (strain 972 / ATCC 24843)</name>
    <name type="common">Fission yeast</name>
    <dbReference type="NCBI Taxonomy" id="284812"/>
    <lineage>
        <taxon>Eukaryota</taxon>
        <taxon>Fungi</taxon>
        <taxon>Dikarya</taxon>
        <taxon>Ascomycota</taxon>
        <taxon>Taphrinomycotina</taxon>
        <taxon>Schizosaccharomycetes</taxon>
        <taxon>Schizosaccharomycetales</taxon>
        <taxon>Schizosaccharomycetaceae</taxon>
        <taxon>Schizosaccharomyces</taxon>
    </lineage>
</organism>
<dbReference type="EMBL" id="CU329671">
    <property type="protein sequence ID" value="CAB53736.2"/>
    <property type="molecule type" value="Genomic_DNA"/>
</dbReference>
<dbReference type="PIR" id="T37981">
    <property type="entry name" value="T37981"/>
</dbReference>
<dbReference type="RefSeq" id="NP_595170.2">
    <property type="nucleotide sequence ID" value="NM_001021078.2"/>
</dbReference>
<dbReference type="SMR" id="Q10339"/>
<dbReference type="BioGRID" id="276664">
    <property type="interactions" value="29"/>
</dbReference>
<dbReference type="FunCoup" id="Q10339">
    <property type="interactions" value="21"/>
</dbReference>
<dbReference type="STRING" id="284812.Q10339"/>
<dbReference type="iPTMnet" id="Q10339"/>
<dbReference type="PaxDb" id="4896-SPBC106.20.1"/>
<dbReference type="EnsemblFungi" id="SPBC106.20.1">
    <property type="protein sequence ID" value="SPBC106.20.1:pep"/>
    <property type="gene ID" value="SPBC106.20"/>
</dbReference>
<dbReference type="GeneID" id="2540127"/>
<dbReference type="KEGG" id="spo:2540127"/>
<dbReference type="PomBase" id="SPBC106.20">
    <property type="gene designation" value="exo70"/>
</dbReference>
<dbReference type="VEuPathDB" id="FungiDB:SPBC106.20"/>
<dbReference type="eggNOG" id="KOG2344">
    <property type="taxonomic scope" value="Eukaryota"/>
</dbReference>
<dbReference type="HOGENOM" id="CLU_010236_4_2_1"/>
<dbReference type="InParanoid" id="Q10339"/>
<dbReference type="OMA" id="CDQAKPL"/>
<dbReference type="PhylomeDB" id="Q10339"/>
<dbReference type="PRO" id="PR:Q10339"/>
<dbReference type="Proteomes" id="UP000002485">
    <property type="component" value="Chromosome II"/>
</dbReference>
<dbReference type="GO" id="GO:0032153">
    <property type="term" value="C:cell division site"/>
    <property type="evidence" value="ECO:0000314"/>
    <property type="project" value="PomBase"/>
</dbReference>
<dbReference type="GO" id="GO:0051286">
    <property type="term" value="C:cell tip"/>
    <property type="evidence" value="ECO:0000314"/>
    <property type="project" value="PomBase"/>
</dbReference>
<dbReference type="GO" id="GO:0005829">
    <property type="term" value="C:cytosol"/>
    <property type="evidence" value="ECO:0007005"/>
    <property type="project" value="PomBase"/>
</dbReference>
<dbReference type="GO" id="GO:0000145">
    <property type="term" value="C:exocyst"/>
    <property type="evidence" value="ECO:0000314"/>
    <property type="project" value="PomBase"/>
</dbReference>
<dbReference type="GO" id="GO:0005634">
    <property type="term" value="C:nucleus"/>
    <property type="evidence" value="ECO:0007005"/>
    <property type="project" value="PomBase"/>
</dbReference>
<dbReference type="GO" id="GO:0005546">
    <property type="term" value="F:phosphatidylinositol-4,5-bisphosphate binding"/>
    <property type="evidence" value="ECO:0000304"/>
    <property type="project" value="PomBase"/>
</dbReference>
<dbReference type="GO" id="GO:0006887">
    <property type="term" value="P:exocytosis"/>
    <property type="evidence" value="ECO:0000316"/>
    <property type="project" value="PomBase"/>
</dbReference>
<dbReference type="GO" id="GO:0006886">
    <property type="term" value="P:intracellular protein transport"/>
    <property type="evidence" value="ECO:0000305"/>
    <property type="project" value="PomBase"/>
</dbReference>
<dbReference type="GO" id="GO:0090522">
    <property type="term" value="P:vesicle tethering involved in exocytosis"/>
    <property type="evidence" value="ECO:0000305"/>
    <property type="project" value="PomBase"/>
</dbReference>
<dbReference type="Gene3D" id="1.20.1280.170">
    <property type="entry name" value="Exocyst complex component Exo70"/>
    <property type="match status" value="1"/>
</dbReference>
<dbReference type="InterPro" id="IPR016159">
    <property type="entry name" value="Cullin_repeat-like_dom_sf"/>
</dbReference>
<dbReference type="InterPro" id="IPR004140">
    <property type="entry name" value="Exo70"/>
</dbReference>
<dbReference type="InterPro" id="IPR046364">
    <property type="entry name" value="Exo70_C"/>
</dbReference>
<dbReference type="PANTHER" id="PTHR12542:SF41">
    <property type="entry name" value="EXOCYST COMPLEX COMPONENT 7"/>
    <property type="match status" value="1"/>
</dbReference>
<dbReference type="PANTHER" id="PTHR12542">
    <property type="entry name" value="EXOCYST COMPLEX PROTEIN EXO70"/>
    <property type="match status" value="1"/>
</dbReference>
<dbReference type="Pfam" id="PF03081">
    <property type="entry name" value="Exo70_C"/>
    <property type="match status" value="1"/>
</dbReference>
<dbReference type="SUPFAM" id="SSF74788">
    <property type="entry name" value="Cullin repeat-like"/>
    <property type="match status" value="1"/>
</dbReference>
<proteinExistence type="evidence at protein level"/>
<comment type="function">
    <text evidence="1">Required for exocytosis.</text>
</comment>
<comment type="subunit">
    <text>The exocyst complex is composed of sec3, sec5, sec6, sec8, sec10, sec15, exo70 and exo84.</text>
</comment>
<comment type="similarity">
    <text evidence="3">Belongs to the EXO70 family.</text>
</comment>
<accession>Q10339</accession>
<feature type="chain" id="PRO_0000118973" description="Exocyst complex component exo70">
    <location>
        <begin position="1"/>
        <end position="615"/>
    </location>
</feature>
<feature type="modified residue" description="Phosphoserine" evidence="2">
    <location>
        <position position="2"/>
    </location>
</feature>
<feature type="modified residue" description="Phosphoserine" evidence="2">
    <location>
        <position position="418"/>
    </location>
</feature>
<reference key="1">
    <citation type="journal article" date="2002" name="Nature">
        <title>The genome sequence of Schizosaccharomyces pombe.</title>
        <authorList>
            <person name="Wood V."/>
            <person name="Gwilliam R."/>
            <person name="Rajandream M.A."/>
            <person name="Lyne M.H."/>
            <person name="Lyne R."/>
            <person name="Stewart A."/>
            <person name="Sgouros J.G."/>
            <person name="Peat N."/>
            <person name="Hayles J."/>
            <person name="Baker S.G."/>
            <person name="Basham D."/>
            <person name="Bowman S."/>
            <person name="Brooks K."/>
            <person name="Brown D."/>
            <person name="Brown S."/>
            <person name="Chillingworth T."/>
            <person name="Churcher C.M."/>
            <person name="Collins M."/>
            <person name="Connor R."/>
            <person name="Cronin A."/>
            <person name="Davis P."/>
            <person name="Feltwell T."/>
            <person name="Fraser A."/>
            <person name="Gentles S."/>
            <person name="Goble A."/>
            <person name="Hamlin N."/>
            <person name="Harris D.E."/>
            <person name="Hidalgo J."/>
            <person name="Hodgson G."/>
            <person name="Holroyd S."/>
            <person name="Hornsby T."/>
            <person name="Howarth S."/>
            <person name="Huckle E.J."/>
            <person name="Hunt S."/>
            <person name="Jagels K."/>
            <person name="James K.D."/>
            <person name="Jones L."/>
            <person name="Jones M."/>
            <person name="Leather S."/>
            <person name="McDonald S."/>
            <person name="McLean J."/>
            <person name="Mooney P."/>
            <person name="Moule S."/>
            <person name="Mungall K.L."/>
            <person name="Murphy L.D."/>
            <person name="Niblett D."/>
            <person name="Odell C."/>
            <person name="Oliver K."/>
            <person name="O'Neil S."/>
            <person name="Pearson D."/>
            <person name="Quail M.A."/>
            <person name="Rabbinowitsch E."/>
            <person name="Rutherford K.M."/>
            <person name="Rutter S."/>
            <person name="Saunders D."/>
            <person name="Seeger K."/>
            <person name="Sharp S."/>
            <person name="Skelton J."/>
            <person name="Simmonds M.N."/>
            <person name="Squares R."/>
            <person name="Squares S."/>
            <person name="Stevens K."/>
            <person name="Taylor K."/>
            <person name="Taylor R.G."/>
            <person name="Tivey A."/>
            <person name="Walsh S.V."/>
            <person name="Warren T."/>
            <person name="Whitehead S."/>
            <person name="Woodward J.R."/>
            <person name="Volckaert G."/>
            <person name="Aert R."/>
            <person name="Robben J."/>
            <person name="Grymonprez B."/>
            <person name="Weltjens I."/>
            <person name="Vanstreels E."/>
            <person name="Rieger M."/>
            <person name="Schaefer M."/>
            <person name="Mueller-Auer S."/>
            <person name="Gabel C."/>
            <person name="Fuchs M."/>
            <person name="Duesterhoeft A."/>
            <person name="Fritzc C."/>
            <person name="Holzer E."/>
            <person name="Moestl D."/>
            <person name="Hilbert H."/>
            <person name="Borzym K."/>
            <person name="Langer I."/>
            <person name="Beck A."/>
            <person name="Lehrach H."/>
            <person name="Reinhardt R."/>
            <person name="Pohl T.M."/>
            <person name="Eger P."/>
            <person name="Zimmermann W."/>
            <person name="Wedler H."/>
            <person name="Wambutt R."/>
            <person name="Purnelle B."/>
            <person name="Goffeau A."/>
            <person name="Cadieu E."/>
            <person name="Dreano S."/>
            <person name="Gloux S."/>
            <person name="Lelaure V."/>
            <person name="Mottier S."/>
            <person name="Galibert F."/>
            <person name="Aves S.J."/>
            <person name="Xiang Z."/>
            <person name="Hunt C."/>
            <person name="Moore K."/>
            <person name="Hurst S.M."/>
            <person name="Lucas M."/>
            <person name="Rochet M."/>
            <person name="Gaillardin C."/>
            <person name="Tallada V.A."/>
            <person name="Garzon A."/>
            <person name="Thode G."/>
            <person name="Daga R.R."/>
            <person name="Cruzado L."/>
            <person name="Jimenez J."/>
            <person name="Sanchez M."/>
            <person name="del Rey F."/>
            <person name="Benito J."/>
            <person name="Dominguez A."/>
            <person name="Revuelta J.L."/>
            <person name="Moreno S."/>
            <person name="Armstrong J."/>
            <person name="Forsburg S.L."/>
            <person name="Cerutti L."/>
            <person name="Lowe T."/>
            <person name="McCombie W.R."/>
            <person name="Paulsen I."/>
            <person name="Potashkin J."/>
            <person name="Shpakovski G.V."/>
            <person name="Ussery D."/>
            <person name="Barrell B.G."/>
            <person name="Nurse P."/>
        </authorList>
    </citation>
    <scope>NUCLEOTIDE SEQUENCE [LARGE SCALE GENOMIC DNA]</scope>
    <source>
        <strain>972 / ATCC 24843</strain>
    </source>
</reference>
<reference key="2">
    <citation type="journal article" date="2002" name="Mol. Biol. Cell">
        <title>The multiprotein exocyst complex is essential for cell separation in Schizosaccharomyces pombe.</title>
        <authorList>
            <person name="Wang H."/>
            <person name="Tang X."/>
            <person name="Liu J."/>
            <person name="Trautmann S."/>
            <person name="Balasundaram D."/>
            <person name="McCollum D."/>
            <person name="Balasubramanian M.K."/>
        </authorList>
    </citation>
    <scope>IDENTIFICATION</scope>
</reference>
<reference key="3">
    <citation type="journal article" date="2008" name="J. Proteome Res.">
        <title>Phosphoproteome analysis of fission yeast.</title>
        <authorList>
            <person name="Wilson-Grady J.T."/>
            <person name="Villen J."/>
            <person name="Gygi S.P."/>
        </authorList>
    </citation>
    <scope>PHOSPHORYLATION [LARGE SCALE ANALYSIS] AT SER-2 AND SER-418</scope>
    <scope>IDENTIFICATION BY MASS SPECTROMETRY</scope>
</reference>